<gene>
    <name type="primary">RBOHE</name>
    <name type="ordered locus">At1g19230</name>
    <name type="ORF">T29M8.10</name>
</gene>
<sequence>MKLSPLSFSTSSSFSHADGIDDGVELISSPFAGGAMLPVFLNDLSRNSGESGSGSSWERELVEVTLELDVGDDSILVCGMSEAASVDSRARSVDLVTARLSRNLSNASTRIRQKLGKLLRSESWKTTTSSTAGERDRDLERQTAVTLGILTARDKRKEDAKLQRSTSSAQRALKGLQFINKTTRGNSCVCDWDCDCDQMWKKVEKRFESLSKNGLLARDDFGECVGMVDSKDFAVSVFDALARRRRQKLEKITKDELHDFWLQISDQSFDARLQIFFDMADSNEDGKITREEIKELLMLSASANKLAKLKEQAEEYASLIMEELDPENFGYIELWQLETLLLQRDAYMNYSRPLSTTSGGVSTPRRNLIRPRHVVQKCRKKLQCLILDNWQRSWVLLVWVMLMAILFVWKFLEYREKAAFKVMGYCLTTAKGAAETLKLNMALVLLPVCRNTLTWLRSTRARACVPFDDNINFHKIIACAIAIGILVHAGTHLACDFPRIINSSPEQFVLIASAFNGTKPTFKDLMTGAEGITGISMVILTTIAFTLASTHFRRNRVRLPAPLDRLTGFNAFWYTHHLLVVVYIMLIVHGTFLFFADKWYQKTTWMYISVPLVLYVAERSLRACRSKHYSVKILKVSMLPGEVLSLIMSKPPGFKYKSGQYIFLQCPTISRFEWHPFSITSAPGDDQLSVHIRTLGDWTEELRRVLTVGKDLSTCVIGRSKFSAYCNIDMINRPKLLVDGPYGAPAQDYRSYDVLLLIGLGIGATPFISILKDLLNNSRDEQTDNEFSRSDFSWNSCTSSYTTATPTSTHGGKKKAVKAHFYWVTREPGSVEWFRGVMEEISDMDCRGQIELHNYLTSVYDEGDARSTLIKMVQALNHAKHGVDILSGTRVRTHFARPNWKEVFSSIARKHPNSTVGVFYCGIQTVAKELKKQAQDMSQKTTTRFEFHKEHF</sequence>
<reference key="1">
    <citation type="journal article" date="1998" name="Plant J.">
        <title>Six Arabidopsis thaliana homologues of the human respiratory burst oxidase (gp91phox).</title>
        <authorList>
            <person name="Torres M.A."/>
            <person name="Onouchi H."/>
            <person name="Hamada S."/>
            <person name="Machida C."/>
            <person name="Hammond-Kosack K.E."/>
            <person name="Jones J.D.G."/>
        </authorList>
    </citation>
    <scope>NUCLEOTIDE SEQUENCE [GENOMIC DNA]</scope>
    <scope>TISSUE SPECIFICITY</scope>
    <source>
        <strain>cv. Landsberg erecta</strain>
    </source>
</reference>
<reference key="2">
    <citation type="journal article" date="2000" name="Nature">
        <title>Sequence and analysis of chromosome 1 of the plant Arabidopsis thaliana.</title>
        <authorList>
            <person name="Theologis A."/>
            <person name="Ecker J.R."/>
            <person name="Palm C.J."/>
            <person name="Federspiel N.A."/>
            <person name="Kaul S."/>
            <person name="White O."/>
            <person name="Alonso J."/>
            <person name="Altafi H."/>
            <person name="Araujo R."/>
            <person name="Bowman C.L."/>
            <person name="Brooks S.Y."/>
            <person name="Buehler E."/>
            <person name="Chan A."/>
            <person name="Chao Q."/>
            <person name="Chen H."/>
            <person name="Cheuk R.F."/>
            <person name="Chin C.W."/>
            <person name="Chung M.K."/>
            <person name="Conn L."/>
            <person name="Conway A.B."/>
            <person name="Conway A.R."/>
            <person name="Creasy T.H."/>
            <person name="Dewar K."/>
            <person name="Dunn P."/>
            <person name="Etgu P."/>
            <person name="Feldblyum T.V."/>
            <person name="Feng J.-D."/>
            <person name="Fong B."/>
            <person name="Fujii C.Y."/>
            <person name="Gill J.E."/>
            <person name="Goldsmith A.D."/>
            <person name="Haas B."/>
            <person name="Hansen N.F."/>
            <person name="Hughes B."/>
            <person name="Huizar L."/>
            <person name="Hunter J.L."/>
            <person name="Jenkins J."/>
            <person name="Johnson-Hopson C."/>
            <person name="Khan S."/>
            <person name="Khaykin E."/>
            <person name="Kim C.J."/>
            <person name="Koo H.L."/>
            <person name="Kremenetskaia I."/>
            <person name="Kurtz D.B."/>
            <person name="Kwan A."/>
            <person name="Lam B."/>
            <person name="Langin-Hooper S."/>
            <person name="Lee A."/>
            <person name="Lee J.M."/>
            <person name="Lenz C.A."/>
            <person name="Li J.H."/>
            <person name="Li Y.-P."/>
            <person name="Lin X."/>
            <person name="Liu S.X."/>
            <person name="Liu Z.A."/>
            <person name="Luros J.S."/>
            <person name="Maiti R."/>
            <person name="Marziali A."/>
            <person name="Militscher J."/>
            <person name="Miranda M."/>
            <person name="Nguyen M."/>
            <person name="Nierman W.C."/>
            <person name="Osborne B.I."/>
            <person name="Pai G."/>
            <person name="Peterson J."/>
            <person name="Pham P.K."/>
            <person name="Rizzo M."/>
            <person name="Rooney T."/>
            <person name="Rowley D."/>
            <person name="Sakano H."/>
            <person name="Salzberg S.L."/>
            <person name="Schwartz J.R."/>
            <person name="Shinn P."/>
            <person name="Southwick A.M."/>
            <person name="Sun H."/>
            <person name="Tallon L.J."/>
            <person name="Tambunga G."/>
            <person name="Toriumi M.J."/>
            <person name="Town C.D."/>
            <person name="Utterback T."/>
            <person name="Van Aken S."/>
            <person name="Vaysberg M."/>
            <person name="Vysotskaia V.S."/>
            <person name="Walker M."/>
            <person name="Wu D."/>
            <person name="Yu G."/>
            <person name="Fraser C.M."/>
            <person name="Venter J.C."/>
            <person name="Davis R.W."/>
        </authorList>
    </citation>
    <scope>NUCLEOTIDE SEQUENCE [LARGE SCALE GENOMIC DNA]</scope>
    <source>
        <strain>cv. Columbia</strain>
    </source>
</reference>
<reference key="3">
    <citation type="journal article" date="2017" name="Plant J.">
        <title>Araport11: a complete reannotation of the Arabidopsis thaliana reference genome.</title>
        <authorList>
            <person name="Cheng C.Y."/>
            <person name="Krishnakumar V."/>
            <person name="Chan A.P."/>
            <person name="Thibaud-Nissen F."/>
            <person name="Schobel S."/>
            <person name="Town C.D."/>
        </authorList>
    </citation>
    <scope>GENOME REANNOTATION</scope>
    <source>
        <strain>cv. Columbia</strain>
    </source>
</reference>
<reference key="4">
    <citation type="journal article" date="2006" name="Plant Physiol.">
        <title>Production of reactive oxygen species by plant NADPH oxidases.</title>
        <authorList>
            <person name="Sagi M."/>
            <person name="Fluhr R."/>
        </authorList>
    </citation>
    <scope>GENE FAMILY</scope>
    <scope>NOMENCLATURE</scope>
</reference>
<proteinExistence type="evidence at transcript level"/>
<dbReference type="EC" id="1.11.1.-"/>
<dbReference type="EC" id="1.6.3.-"/>
<dbReference type="EMBL" id="AF055356">
    <property type="protein sequence ID" value="AAC39478.1"/>
    <property type="status" value="ALT_SEQ"/>
    <property type="molecule type" value="Genomic_DNA"/>
</dbReference>
<dbReference type="EMBL" id="AC069143">
    <property type="protein sequence ID" value="AAF82233.1"/>
    <property type="status" value="ALT_SEQ"/>
    <property type="molecule type" value="Genomic_DNA"/>
</dbReference>
<dbReference type="EMBL" id="CP002684">
    <property type="protein sequence ID" value="AEE29820.1"/>
    <property type="status" value="ALT_SEQ"/>
    <property type="molecule type" value="Genomic_DNA"/>
</dbReference>
<dbReference type="EMBL" id="CP002684">
    <property type="protein sequence ID" value="AEE29821.2"/>
    <property type="molecule type" value="Genomic_DNA"/>
</dbReference>
<dbReference type="PIR" id="H86325">
    <property type="entry name" value="H86325"/>
</dbReference>
<dbReference type="RefSeq" id="NP_001319042.1">
    <molecule id="O81211-1"/>
    <property type="nucleotide sequence ID" value="NM_001332388.1"/>
</dbReference>
<dbReference type="RefSeq" id="NP_173357.1">
    <property type="nucleotide sequence ID" value="NM_101781.2"/>
</dbReference>
<dbReference type="SMR" id="O81211"/>
<dbReference type="FunCoup" id="O81211">
    <property type="interactions" value="619"/>
</dbReference>
<dbReference type="STRING" id="3702.O81211"/>
<dbReference type="PaxDb" id="3702-AT1G19230.2"/>
<dbReference type="ProteomicsDB" id="236526">
    <molecule id="O81211-1"/>
</dbReference>
<dbReference type="EnsemblPlants" id="AT1G19230.2">
    <molecule id="O81211-1"/>
    <property type="protein sequence ID" value="AT1G19230.2"/>
    <property type="gene ID" value="AT1G19230"/>
</dbReference>
<dbReference type="GeneID" id="838506"/>
<dbReference type="Gramene" id="AT1G19230.2">
    <molecule id="O81211-1"/>
    <property type="protein sequence ID" value="AT1G19230.2"/>
    <property type="gene ID" value="AT1G19230"/>
</dbReference>
<dbReference type="KEGG" id="ath:AT1G19230"/>
<dbReference type="Araport" id="AT1G19230"/>
<dbReference type="TAIR" id="AT1G19230">
    <property type="gene designation" value="ATRBOHE"/>
</dbReference>
<dbReference type="eggNOG" id="KOG0039">
    <property type="taxonomic scope" value="Eukaryota"/>
</dbReference>
<dbReference type="InParanoid" id="O81211"/>
<dbReference type="BioCyc" id="ARA:AT1G19230-MONOMER"/>
<dbReference type="PRO" id="PR:O81211"/>
<dbReference type="Proteomes" id="UP000006548">
    <property type="component" value="Chromosome 1"/>
</dbReference>
<dbReference type="ExpressionAtlas" id="O81211">
    <property type="expression patterns" value="baseline and differential"/>
</dbReference>
<dbReference type="GO" id="GO:0016020">
    <property type="term" value="C:membrane"/>
    <property type="evidence" value="ECO:0007669"/>
    <property type="project" value="UniProtKB-SubCell"/>
</dbReference>
<dbReference type="GO" id="GO:0005509">
    <property type="term" value="F:calcium ion binding"/>
    <property type="evidence" value="ECO:0007669"/>
    <property type="project" value="InterPro"/>
</dbReference>
<dbReference type="GO" id="GO:0050664">
    <property type="term" value="F:oxidoreductase activity, acting on NAD(P)H, oxygen as acceptor"/>
    <property type="evidence" value="ECO:0007669"/>
    <property type="project" value="InterPro"/>
</dbReference>
<dbReference type="GO" id="GO:0004601">
    <property type="term" value="F:peroxidase activity"/>
    <property type="evidence" value="ECO:0007669"/>
    <property type="project" value="UniProtKB-KW"/>
</dbReference>
<dbReference type="CDD" id="cd00051">
    <property type="entry name" value="EFh"/>
    <property type="match status" value="1"/>
</dbReference>
<dbReference type="CDD" id="cd06186">
    <property type="entry name" value="NOX_Duox_like_FAD_NADP"/>
    <property type="match status" value="1"/>
</dbReference>
<dbReference type="FunFam" id="1.10.238.10:FF:000049">
    <property type="entry name" value="Respiratory burst oxidase homolog A"/>
    <property type="match status" value="1"/>
</dbReference>
<dbReference type="FunFam" id="2.40.30.10:FF:000019">
    <property type="entry name" value="Respiratory burst oxidase homolog A"/>
    <property type="match status" value="1"/>
</dbReference>
<dbReference type="FunFam" id="3.40.50.80:FF:000028">
    <property type="entry name" value="Respiratory burst oxidase protein E"/>
    <property type="match status" value="1"/>
</dbReference>
<dbReference type="Gene3D" id="1.10.238.10">
    <property type="entry name" value="EF-hand"/>
    <property type="match status" value="1"/>
</dbReference>
<dbReference type="Gene3D" id="3.40.50.80">
    <property type="entry name" value="Nucleotide-binding domain of ferredoxin-NADP reductase (FNR) module"/>
    <property type="match status" value="1"/>
</dbReference>
<dbReference type="Gene3D" id="2.40.30.10">
    <property type="entry name" value="Translation factors"/>
    <property type="match status" value="1"/>
</dbReference>
<dbReference type="InterPro" id="IPR000778">
    <property type="entry name" value="Cyt_b245_heavy_chain"/>
</dbReference>
<dbReference type="InterPro" id="IPR011992">
    <property type="entry name" value="EF-hand-dom_pair"/>
</dbReference>
<dbReference type="InterPro" id="IPR018247">
    <property type="entry name" value="EF_Hand_1_Ca_BS"/>
</dbReference>
<dbReference type="InterPro" id="IPR002048">
    <property type="entry name" value="EF_hand_dom"/>
</dbReference>
<dbReference type="InterPro" id="IPR013112">
    <property type="entry name" value="FAD-bd_8"/>
</dbReference>
<dbReference type="InterPro" id="IPR017927">
    <property type="entry name" value="FAD-bd_FR_type"/>
</dbReference>
<dbReference type="InterPro" id="IPR013130">
    <property type="entry name" value="Fe3_Rdtase_TM_dom"/>
</dbReference>
<dbReference type="InterPro" id="IPR013121">
    <property type="entry name" value="Fe_red_NAD-bd_6"/>
</dbReference>
<dbReference type="InterPro" id="IPR039261">
    <property type="entry name" value="FNR_nucleotide-bd"/>
</dbReference>
<dbReference type="InterPro" id="IPR013623">
    <property type="entry name" value="NADPH_Ox"/>
</dbReference>
<dbReference type="InterPro" id="IPR050369">
    <property type="entry name" value="RBOH/FRE"/>
</dbReference>
<dbReference type="InterPro" id="IPR017938">
    <property type="entry name" value="Riboflavin_synthase-like_b-brl"/>
</dbReference>
<dbReference type="PANTHER" id="PTHR11972">
    <property type="entry name" value="NADPH OXIDASE"/>
    <property type="match status" value="1"/>
</dbReference>
<dbReference type="PANTHER" id="PTHR11972:SF44">
    <property type="entry name" value="RESPIRATORY BURST OXIDASE HOMOLOG PROTEIN E"/>
    <property type="match status" value="1"/>
</dbReference>
<dbReference type="Pfam" id="PF08022">
    <property type="entry name" value="FAD_binding_8"/>
    <property type="match status" value="1"/>
</dbReference>
<dbReference type="Pfam" id="PF01794">
    <property type="entry name" value="Ferric_reduct"/>
    <property type="match status" value="1"/>
</dbReference>
<dbReference type="Pfam" id="PF08030">
    <property type="entry name" value="NAD_binding_6"/>
    <property type="match status" value="1"/>
</dbReference>
<dbReference type="Pfam" id="PF08414">
    <property type="entry name" value="NADPH_Ox"/>
    <property type="match status" value="1"/>
</dbReference>
<dbReference type="PRINTS" id="PR00466">
    <property type="entry name" value="GP91PHOX"/>
</dbReference>
<dbReference type="SFLD" id="SFLDG01168">
    <property type="entry name" value="Ferric_reductase_subgroup_(FRE"/>
    <property type="match status" value="1"/>
</dbReference>
<dbReference type="SFLD" id="SFLDG01169">
    <property type="entry name" value="NADPH_oxidase_subgroup_(NOX)"/>
    <property type="match status" value="1"/>
</dbReference>
<dbReference type="SUPFAM" id="SSF47473">
    <property type="entry name" value="EF-hand"/>
    <property type="match status" value="1"/>
</dbReference>
<dbReference type="SUPFAM" id="SSF52343">
    <property type="entry name" value="Ferredoxin reductase-like, C-terminal NADP-linked domain"/>
    <property type="match status" value="1"/>
</dbReference>
<dbReference type="SUPFAM" id="SSF63380">
    <property type="entry name" value="Riboflavin synthase domain-like"/>
    <property type="match status" value="1"/>
</dbReference>
<dbReference type="PROSITE" id="PS00018">
    <property type="entry name" value="EF_HAND_1"/>
    <property type="match status" value="1"/>
</dbReference>
<dbReference type="PROSITE" id="PS50222">
    <property type="entry name" value="EF_HAND_2"/>
    <property type="match status" value="1"/>
</dbReference>
<dbReference type="PROSITE" id="PS51384">
    <property type="entry name" value="FAD_FR"/>
    <property type="match status" value="1"/>
</dbReference>
<accession>O81211</accession>
<accession>F4IE24</accession>
<accession>F4IE25</accession>
<accession>Q9LMA3</accession>
<protein>
    <recommendedName>
        <fullName>Respiratory burst oxidase homolog protein E</fullName>
        <ecNumber>1.11.1.-</ecNumber>
        <ecNumber>1.6.3.-</ecNumber>
    </recommendedName>
    <alternativeName>
        <fullName>NADPH oxidase RBOHE</fullName>
        <shortName>AtRBOHE</shortName>
    </alternativeName>
</protein>
<organism>
    <name type="scientific">Arabidopsis thaliana</name>
    <name type="common">Mouse-ear cress</name>
    <dbReference type="NCBI Taxonomy" id="3702"/>
    <lineage>
        <taxon>Eukaryota</taxon>
        <taxon>Viridiplantae</taxon>
        <taxon>Streptophyta</taxon>
        <taxon>Embryophyta</taxon>
        <taxon>Tracheophyta</taxon>
        <taxon>Spermatophyta</taxon>
        <taxon>Magnoliopsida</taxon>
        <taxon>eudicotyledons</taxon>
        <taxon>Gunneridae</taxon>
        <taxon>Pentapetalae</taxon>
        <taxon>rosids</taxon>
        <taxon>malvids</taxon>
        <taxon>Brassicales</taxon>
        <taxon>Brassicaceae</taxon>
        <taxon>Camelineae</taxon>
        <taxon>Arabidopsis</taxon>
    </lineage>
</organism>
<name>RBOHE_ARATH</name>
<evidence type="ECO:0000250" key="1"/>
<evidence type="ECO:0000255" key="2"/>
<evidence type="ECO:0000255" key="3">
    <source>
        <dbReference type="PROSITE-ProRule" id="PRU00448"/>
    </source>
</evidence>
<evidence type="ECO:0000255" key="4">
    <source>
        <dbReference type="PROSITE-ProRule" id="PRU00716"/>
    </source>
</evidence>
<evidence type="ECO:0000269" key="5">
    <source>
    </source>
</evidence>
<evidence type="ECO:0000305" key="6"/>
<keyword id="KW-0025">Alternative splicing</keyword>
<keyword id="KW-0106">Calcium</keyword>
<keyword id="KW-0274">FAD</keyword>
<keyword id="KW-0285">Flavoprotein</keyword>
<keyword id="KW-0472">Membrane</keyword>
<keyword id="KW-0479">Metal-binding</keyword>
<keyword id="KW-0521">NADP</keyword>
<keyword id="KW-0560">Oxidoreductase</keyword>
<keyword id="KW-0575">Peroxidase</keyword>
<keyword id="KW-1185">Reference proteome</keyword>
<keyword id="KW-0677">Repeat</keyword>
<keyword id="KW-0812">Transmembrane</keyword>
<keyword id="KW-1133">Transmembrane helix</keyword>
<comment type="function">
    <text>Calcium-dependent NADPH oxidase that generates superoxide.</text>
</comment>
<comment type="subunit">
    <text evidence="1">Monomer and homodimer.</text>
</comment>
<comment type="subcellular location">
    <subcellularLocation>
        <location evidence="6">Membrane</location>
        <topology evidence="6">Multi-pass membrane protein</topology>
    </subcellularLocation>
</comment>
<comment type="alternative products">
    <event type="alternative splicing"/>
    <isoform>
        <id>O81211-1</id>
        <name>1</name>
        <sequence type="displayed"/>
    </isoform>
    <text>A number of isoforms are produced. According to EST sequences.</text>
</comment>
<comment type="tissue specificity">
    <text evidence="5">Expressed in roots, inflorescences, leaves and stems.</text>
</comment>
<comment type="similarity">
    <text evidence="6">Belongs to the RBOH (TC 5.B.1.3) family.</text>
</comment>
<comment type="sequence caution" evidence="6">
    <conflict type="erroneous gene model prediction">
        <sequence resource="EMBL-CDS" id="AAC39478"/>
    </conflict>
</comment>
<comment type="sequence caution" evidence="6">
    <conflict type="erroneous gene model prediction">
        <sequence resource="EMBL-CDS" id="AAF82233"/>
    </conflict>
</comment>
<comment type="sequence caution" evidence="6">
    <conflict type="erroneous gene model prediction">
        <sequence resource="EMBL-CDS" id="AEE29820"/>
    </conflict>
</comment>
<feature type="chain" id="PRO_0000313757" description="Respiratory burst oxidase homolog protein E">
    <location>
        <begin position="1"/>
        <end position="952"/>
    </location>
</feature>
<feature type="topological domain" description="Cytoplasmic" evidence="2">
    <location>
        <begin position="1"/>
        <end position="392"/>
    </location>
</feature>
<feature type="transmembrane region" description="Helical; Name=1" evidence="2">
    <location>
        <begin position="393"/>
        <end position="413"/>
    </location>
</feature>
<feature type="topological domain" description="Extracellular" evidence="2">
    <location>
        <begin position="414"/>
        <end position="475"/>
    </location>
</feature>
<feature type="transmembrane region" description="Helical" evidence="2">
    <location>
        <begin position="476"/>
        <end position="496"/>
    </location>
</feature>
<feature type="topological domain" description="Cytoplasmic" evidence="2">
    <location>
        <begin position="497"/>
        <end position="531"/>
    </location>
</feature>
<feature type="transmembrane region" description="Helical; Name=3" evidence="2">
    <location>
        <begin position="532"/>
        <end position="552"/>
    </location>
</feature>
<feature type="topological domain" description="Extracellular" evidence="2">
    <location>
        <begin position="553"/>
        <end position="574"/>
    </location>
</feature>
<feature type="transmembrane region" description="Helical; Name=4" evidence="2">
    <location>
        <begin position="575"/>
        <end position="595"/>
    </location>
</feature>
<feature type="topological domain" description="Cytoplasmic" evidence="2">
    <location>
        <begin position="596"/>
        <end position="603"/>
    </location>
</feature>
<feature type="transmembrane region" description="Helical; Name=5" evidence="1">
    <location>
        <begin position="604"/>
        <end position="621"/>
    </location>
</feature>
<feature type="topological domain" description="Extracellular" evidence="2">
    <location>
        <begin position="622"/>
        <end position="750"/>
    </location>
</feature>
<feature type="transmembrane region" description="Helical; Name=6" evidence="2">
    <location>
        <begin position="751"/>
        <end position="771"/>
    </location>
</feature>
<feature type="topological domain" description="Cytoplasmic" evidence="2">
    <location>
        <begin position="772"/>
        <end position="952"/>
    </location>
</feature>
<feature type="domain" description="EF-hand 1" evidence="3">
    <location>
        <begin position="268"/>
        <end position="303"/>
    </location>
</feature>
<feature type="domain" description="EF-hand 2" evidence="6">
    <location>
        <begin position="312"/>
        <end position="347"/>
    </location>
</feature>
<feature type="domain" description="Ferric oxidoreductase">
    <location>
        <begin position="431"/>
        <end position="587"/>
    </location>
</feature>
<feature type="domain" description="FAD-binding FR-type" evidence="4">
    <location>
        <begin position="626"/>
        <end position="748"/>
    </location>
</feature>
<feature type="region of interest" description="EF-hand-like 1" evidence="1">
    <location>
        <begin position="211"/>
        <end position="219"/>
    </location>
</feature>
<feature type="region of interest" description="EF-hand-like 2" evidence="1">
    <location>
        <begin position="245"/>
        <end position="256"/>
    </location>
</feature>
<feature type="binding site" evidence="3">
    <location>
        <position position="281"/>
    </location>
    <ligand>
        <name>Ca(2+)</name>
        <dbReference type="ChEBI" id="CHEBI:29108"/>
    </ligand>
</feature>
<feature type="binding site" evidence="3">
    <location>
        <position position="283"/>
    </location>
    <ligand>
        <name>Ca(2+)</name>
        <dbReference type="ChEBI" id="CHEBI:29108"/>
    </ligand>
</feature>
<feature type="binding site" evidence="3">
    <location>
        <position position="285"/>
    </location>
    <ligand>
        <name>Ca(2+)</name>
        <dbReference type="ChEBI" id="CHEBI:29108"/>
    </ligand>
</feature>
<feature type="binding site" evidence="3">
    <location>
        <position position="287"/>
    </location>
    <ligand>
        <name>Ca(2+)</name>
        <dbReference type="ChEBI" id="CHEBI:29108"/>
    </ligand>
</feature>
<feature type="binding site" evidence="3">
    <location>
        <position position="292"/>
    </location>
    <ligand>
        <name>Ca(2+)</name>
        <dbReference type="ChEBI" id="CHEBI:29108"/>
    </ligand>
</feature>